<feature type="transit peptide" description="Chloroplast" evidence="1">
    <location>
        <begin position="1"/>
        <end position="60"/>
    </location>
</feature>
<feature type="chain" id="PRO_0000002675" description="ATP synthase gamma chain 2, chloroplastic">
    <location>
        <begin position="61"/>
        <end position="386"/>
    </location>
</feature>
<feature type="region of interest" description="Disordered" evidence="2">
    <location>
        <begin position="1"/>
        <end position="22"/>
    </location>
</feature>
<feature type="active site" evidence="1">
    <location>
        <position position="149"/>
    </location>
</feature>
<feature type="disulfide bond" evidence="1">
    <location>
        <begin position="260"/>
        <end position="266"/>
    </location>
</feature>
<proteinExistence type="evidence at transcript level"/>
<sequence>MTGSISTSWLLSSPSNSNSASSSESYSFIATLKPVRYYPFQSLTPNRISSRSPLPSIQIRAGIRELRERIDSVKNTQKITEAMRLVAAARVRRAQDAVIKGRPFTETLVEILYSINQSAQLEDIDFPLSIVRPVKRVALVVVTGDKGLCGGFNNAVTKKATLRVQELKQRGIDCVVISVGKKGNAYFSRRDEFDVDKCIEGGGVFPTTKEAQVIADDVFSLFVSEEVDKVELVYTKFVSLVKSDPVIHTLLPLSMKGESCDVKGECVDAIEDEMFRLTSKDGKLAVERTKLEVEKPEISPLMQFEQDPVQILDAMMPLYLNSQILRALQESLASELASRMNAMSNATDNAVELKKNLTMAYNRARQAKITGELLEIVAGAEALRES</sequence>
<keyword id="KW-0066">ATP synthesis</keyword>
<keyword id="KW-0139">CF(1)</keyword>
<keyword id="KW-0150">Chloroplast</keyword>
<keyword id="KW-1015">Disulfide bond</keyword>
<keyword id="KW-0375">Hydrogen ion transport</keyword>
<keyword id="KW-0406">Ion transport</keyword>
<keyword id="KW-0472">Membrane</keyword>
<keyword id="KW-0934">Plastid</keyword>
<keyword id="KW-1185">Reference proteome</keyword>
<keyword id="KW-0793">Thylakoid</keyword>
<keyword id="KW-0809">Transit peptide</keyword>
<keyword id="KW-0813">Transport</keyword>
<protein>
    <recommendedName>
        <fullName>ATP synthase gamma chain 2, chloroplastic</fullName>
    </recommendedName>
    <alternativeName>
        <fullName>F-ATPase gamma subunit 2</fullName>
    </alternativeName>
</protein>
<name>ATPG2_ARATH</name>
<reference key="1">
    <citation type="journal article" date="1991" name="J. Biol. Chem.">
        <title>Two genes, atpC1 and atpC2, for the gamma subunit of Arabidopsis thaliana chloroplast ATP synthase.</title>
        <authorList>
            <person name="Inohara N."/>
            <person name="Iwamoto A."/>
            <person name="Moriyama Y."/>
            <person name="Shimomura S."/>
            <person name="Maeda M."/>
            <person name="Futai M."/>
        </authorList>
    </citation>
    <scope>NUCLEOTIDE SEQUENCE [GENOMIC DNA]</scope>
</reference>
<reference key="2">
    <citation type="journal article" date="2000" name="Nature">
        <title>Sequence and analysis of chromosome 1 of the plant Arabidopsis thaliana.</title>
        <authorList>
            <person name="Theologis A."/>
            <person name="Ecker J.R."/>
            <person name="Palm C.J."/>
            <person name="Federspiel N.A."/>
            <person name="Kaul S."/>
            <person name="White O."/>
            <person name="Alonso J."/>
            <person name="Altafi H."/>
            <person name="Araujo R."/>
            <person name="Bowman C.L."/>
            <person name="Brooks S.Y."/>
            <person name="Buehler E."/>
            <person name="Chan A."/>
            <person name="Chao Q."/>
            <person name="Chen H."/>
            <person name="Cheuk R.F."/>
            <person name="Chin C.W."/>
            <person name="Chung M.K."/>
            <person name="Conn L."/>
            <person name="Conway A.B."/>
            <person name="Conway A.R."/>
            <person name="Creasy T.H."/>
            <person name="Dewar K."/>
            <person name="Dunn P."/>
            <person name="Etgu P."/>
            <person name="Feldblyum T.V."/>
            <person name="Feng J.-D."/>
            <person name="Fong B."/>
            <person name="Fujii C.Y."/>
            <person name="Gill J.E."/>
            <person name="Goldsmith A.D."/>
            <person name="Haas B."/>
            <person name="Hansen N.F."/>
            <person name="Hughes B."/>
            <person name="Huizar L."/>
            <person name="Hunter J.L."/>
            <person name="Jenkins J."/>
            <person name="Johnson-Hopson C."/>
            <person name="Khan S."/>
            <person name="Khaykin E."/>
            <person name="Kim C.J."/>
            <person name="Koo H.L."/>
            <person name="Kremenetskaia I."/>
            <person name="Kurtz D.B."/>
            <person name="Kwan A."/>
            <person name="Lam B."/>
            <person name="Langin-Hooper S."/>
            <person name="Lee A."/>
            <person name="Lee J.M."/>
            <person name="Lenz C.A."/>
            <person name="Li J.H."/>
            <person name="Li Y.-P."/>
            <person name="Lin X."/>
            <person name="Liu S.X."/>
            <person name="Liu Z.A."/>
            <person name="Luros J.S."/>
            <person name="Maiti R."/>
            <person name="Marziali A."/>
            <person name="Militscher J."/>
            <person name="Miranda M."/>
            <person name="Nguyen M."/>
            <person name="Nierman W.C."/>
            <person name="Osborne B.I."/>
            <person name="Pai G."/>
            <person name="Peterson J."/>
            <person name="Pham P.K."/>
            <person name="Rizzo M."/>
            <person name="Rooney T."/>
            <person name="Rowley D."/>
            <person name="Sakano H."/>
            <person name="Salzberg S.L."/>
            <person name="Schwartz J.R."/>
            <person name="Shinn P."/>
            <person name="Southwick A.M."/>
            <person name="Sun H."/>
            <person name="Tallon L.J."/>
            <person name="Tambunga G."/>
            <person name="Toriumi M.J."/>
            <person name="Town C.D."/>
            <person name="Utterback T."/>
            <person name="Van Aken S."/>
            <person name="Vaysberg M."/>
            <person name="Vysotskaia V.S."/>
            <person name="Walker M."/>
            <person name="Wu D."/>
            <person name="Yu G."/>
            <person name="Fraser C.M."/>
            <person name="Venter J.C."/>
            <person name="Davis R.W."/>
        </authorList>
    </citation>
    <scope>NUCLEOTIDE SEQUENCE [LARGE SCALE GENOMIC DNA]</scope>
    <source>
        <strain>cv. Columbia</strain>
    </source>
</reference>
<reference key="3">
    <citation type="journal article" date="2017" name="Plant J.">
        <title>Araport11: a complete reannotation of the Arabidopsis thaliana reference genome.</title>
        <authorList>
            <person name="Cheng C.Y."/>
            <person name="Krishnakumar V."/>
            <person name="Chan A.P."/>
            <person name="Thibaud-Nissen F."/>
            <person name="Schobel S."/>
            <person name="Town C.D."/>
        </authorList>
    </citation>
    <scope>GENOME REANNOTATION</scope>
    <source>
        <strain>cv. Columbia</strain>
    </source>
</reference>
<reference key="4">
    <citation type="journal article" date="2003" name="Science">
        <title>Empirical analysis of transcriptional activity in the Arabidopsis genome.</title>
        <authorList>
            <person name="Yamada K."/>
            <person name="Lim J."/>
            <person name="Dale J.M."/>
            <person name="Chen H."/>
            <person name="Shinn P."/>
            <person name="Palm C.J."/>
            <person name="Southwick A.M."/>
            <person name="Wu H.C."/>
            <person name="Kim C.J."/>
            <person name="Nguyen M."/>
            <person name="Pham P.K."/>
            <person name="Cheuk R.F."/>
            <person name="Karlin-Newmann G."/>
            <person name="Liu S.X."/>
            <person name="Lam B."/>
            <person name="Sakano H."/>
            <person name="Wu T."/>
            <person name="Yu G."/>
            <person name="Miranda M."/>
            <person name="Quach H.L."/>
            <person name="Tripp M."/>
            <person name="Chang C.H."/>
            <person name="Lee J.M."/>
            <person name="Toriumi M.J."/>
            <person name="Chan M.M."/>
            <person name="Tang C.C."/>
            <person name="Onodera C.S."/>
            <person name="Deng J.M."/>
            <person name="Akiyama K."/>
            <person name="Ansari Y."/>
            <person name="Arakawa T."/>
            <person name="Banh J."/>
            <person name="Banno F."/>
            <person name="Bowser L."/>
            <person name="Brooks S.Y."/>
            <person name="Carninci P."/>
            <person name="Chao Q."/>
            <person name="Choy N."/>
            <person name="Enju A."/>
            <person name="Goldsmith A.D."/>
            <person name="Gurjal M."/>
            <person name="Hansen N.F."/>
            <person name="Hayashizaki Y."/>
            <person name="Johnson-Hopson C."/>
            <person name="Hsuan V.W."/>
            <person name="Iida K."/>
            <person name="Karnes M."/>
            <person name="Khan S."/>
            <person name="Koesema E."/>
            <person name="Ishida J."/>
            <person name="Jiang P.X."/>
            <person name="Jones T."/>
            <person name="Kawai J."/>
            <person name="Kamiya A."/>
            <person name="Meyers C."/>
            <person name="Nakajima M."/>
            <person name="Narusaka M."/>
            <person name="Seki M."/>
            <person name="Sakurai T."/>
            <person name="Satou M."/>
            <person name="Tamse R."/>
            <person name="Vaysberg M."/>
            <person name="Wallender E.K."/>
            <person name="Wong C."/>
            <person name="Yamamura Y."/>
            <person name="Yuan S."/>
            <person name="Shinozaki K."/>
            <person name="Davis R.W."/>
            <person name="Theologis A."/>
            <person name="Ecker J.R."/>
        </authorList>
    </citation>
    <scope>NUCLEOTIDE SEQUENCE [LARGE SCALE MRNA]</scope>
    <source>
        <strain>cv. Columbia</strain>
    </source>
</reference>
<dbReference type="EMBL" id="M61742">
    <property type="protein sequence ID" value="AAA32833.1"/>
    <property type="molecule type" value="Genomic_DNA"/>
</dbReference>
<dbReference type="EMBL" id="AC034256">
    <property type="protein sequence ID" value="AAF82140.1"/>
    <property type="molecule type" value="Genomic_DNA"/>
</dbReference>
<dbReference type="EMBL" id="CP002684">
    <property type="protein sequence ID" value="AEE29351.1"/>
    <property type="molecule type" value="Genomic_DNA"/>
</dbReference>
<dbReference type="EMBL" id="AY065255">
    <property type="protein sequence ID" value="AAL38731.1"/>
    <property type="molecule type" value="mRNA"/>
</dbReference>
<dbReference type="EMBL" id="AY117311">
    <property type="protein sequence ID" value="AAM51386.1"/>
    <property type="molecule type" value="mRNA"/>
</dbReference>
<dbReference type="PIR" id="A39732">
    <property type="entry name" value="A39732"/>
</dbReference>
<dbReference type="RefSeq" id="NP_173022.1">
    <property type="nucleotide sequence ID" value="NM_101438.2"/>
</dbReference>
<dbReference type="SMR" id="Q01909"/>
<dbReference type="BioGRID" id="23379">
    <property type="interactions" value="1"/>
</dbReference>
<dbReference type="FunCoup" id="Q01909">
    <property type="interactions" value="12"/>
</dbReference>
<dbReference type="IntAct" id="Q01909">
    <property type="interactions" value="1"/>
</dbReference>
<dbReference type="STRING" id="3702.Q01909"/>
<dbReference type="iPTMnet" id="Q01909"/>
<dbReference type="PaxDb" id="3702-AT1G15700.1"/>
<dbReference type="ProteomicsDB" id="241135"/>
<dbReference type="EnsemblPlants" id="AT1G15700.1">
    <property type="protein sequence ID" value="AT1G15700.1"/>
    <property type="gene ID" value="AT1G15700"/>
</dbReference>
<dbReference type="GeneID" id="838139"/>
<dbReference type="Gramene" id="AT1G15700.1">
    <property type="protein sequence ID" value="AT1G15700.1"/>
    <property type="gene ID" value="AT1G15700"/>
</dbReference>
<dbReference type="KEGG" id="ath:AT1G15700"/>
<dbReference type="Araport" id="AT1G15700"/>
<dbReference type="TAIR" id="AT1G15700">
    <property type="gene designation" value="ATPC2"/>
</dbReference>
<dbReference type="eggNOG" id="KOG1531">
    <property type="taxonomic scope" value="Eukaryota"/>
</dbReference>
<dbReference type="HOGENOM" id="CLU_050669_0_0_1"/>
<dbReference type="InParanoid" id="Q01909"/>
<dbReference type="OMA" id="IWVSSKP"/>
<dbReference type="PhylomeDB" id="Q01909"/>
<dbReference type="BioCyc" id="ARA:AT1G15700-MONOMER"/>
<dbReference type="PRO" id="PR:Q01909"/>
<dbReference type="Proteomes" id="UP000006548">
    <property type="component" value="Chromosome 1"/>
</dbReference>
<dbReference type="ExpressionAtlas" id="Q01909">
    <property type="expression patterns" value="baseline and differential"/>
</dbReference>
<dbReference type="GO" id="GO:0009507">
    <property type="term" value="C:chloroplast"/>
    <property type="evidence" value="ECO:0000314"/>
    <property type="project" value="TAIR"/>
</dbReference>
<dbReference type="GO" id="GO:0009535">
    <property type="term" value="C:chloroplast thylakoid membrane"/>
    <property type="evidence" value="ECO:0007669"/>
    <property type="project" value="UniProtKB-SubCell"/>
</dbReference>
<dbReference type="GO" id="GO:0045259">
    <property type="term" value="C:proton-transporting ATP synthase complex"/>
    <property type="evidence" value="ECO:0007669"/>
    <property type="project" value="UniProtKB-KW"/>
</dbReference>
<dbReference type="GO" id="GO:0030234">
    <property type="term" value="F:enzyme regulator activity"/>
    <property type="evidence" value="ECO:0000304"/>
    <property type="project" value="TAIR"/>
</dbReference>
<dbReference type="GO" id="GO:0046933">
    <property type="term" value="F:proton-transporting ATP synthase activity, rotational mechanism"/>
    <property type="evidence" value="ECO:0007669"/>
    <property type="project" value="InterPro"/>
</dbReference>
<dbReference type="GO" id="GO:0015986">
    <property type="term" value="P:proton motive force-driven ATP synthesis"/>
    <property type="evidence" value="ECO:0000304"/>
    <property type="project" value="TAIR"/>
</dbReference>
<dbReference type="GO" id="GO:2000067">
    <property type="term" value="P:regulation of root morphogenesis"/>
    <property type="evidence" value="ECO:0000315"/>
    <property type="project" value="TAIR"/>
</dbReference>
<dbReference type="CDD" id="cd12151">
    <property type="entry name" value="F1-ATPase_gamma"/>
    <property type="match status" value="1"/>
</dbReference>
<dbReference type="FunFam" id="3.40.1380.10:FF:000006">
    <property type="entry name" value="ATP synthase gamma chain"/>
    <property type="match status" value="1"/>
</dbReference>
<dbReference type="FunFam" id="1.10.287.80:FF:000003">
    <property type="entry name" value="ATP synthase gamma chain, chloroplastic"/>
    <property type="match status" value="1"/>
</dbReference>
<dbReference type="FunFam" id="1.10.287.80:FF:000004">
    <property type="entry name" value="ATP synthase gamma chain, chloroplastic"/>
    <property type="match status" value="1"/>
</dbReference>
<dbReference type="Gene3D" id="3.40.1380.10">
    <property type="match status" value="1"/>
</dbReference>
<dbReference type="Gene3D" id="1.10.287.80">
    <property type="entry name" value="ATP synthase, gamma subunit, helix hairpin domain"/>
    <property type="match status" value="2"/>
</dbReference>
<dbReference type="HAMAP" id="MF_00815">
    <property type="entry name" value="ATP_synth_gamma_bact"/>
    <property type="match status" value="1"/>
</dbReference>
<dbReference type="InterPro" id="IPR035968">
    <property type="entry name" value="ATP_synth_F1_ATPase_gsu"/>
</dbReference>
<dbReference type="InterPro" id="IPR000131">
    <property type="entry name" value="ATP_synth_F1_gsu"/>
</dbReference>
<dbReference type="InterPro" id="IPR023632">
    <property type="entry name" value="ATP_synth_F1_gsu_CS"/>
</dbReference>
<dbReference type="NCBIfam" id="TIGR01146">
    <property type="entry name" value="ATPsyn_F1gamma"/>
    <property type="match status" value="1"/>
</dbReference>
<dbReference type="NCBIfam" id="NF004145">
    <property type="entry name" value="PRK05621.1-2"/>
    <property type="match status" value="1"/>
</dbReference>
<dbReference type="PANTHER" id="PTHR11693">
    <property type="entry name" value="ATP SYNTHASE GAMMA CHAIN"/>
    <property type="match status" value="1"/>
</dbReference>
<dbReference type="PANTHER" id="PTHR11693:SF36">
    <property type="entry name" value="ATP SYNTHASE GAMMA CHAIN 2, CHLOROPLASTIC"/>
    <property type="match status" value="1"/>
</dbReference>
<dbReference type="Pfam" id="PF00231">
    <property type="entry name" value="ATP-synt"/>
    <property type="match status" value="1"/>
</dbReference>
<dbReference type="PRINTS" id="PR00126">
    <property type="entry name" value="ATPASEGAMMA"/>
</dbReference>
<dbReference type="SUPFAM" id="SSF52943">
    <property type="entry name" value="ATP synthase (F1-ATPase), gamma subunit"/>
    <property type="match status" value="1"/>
</dbReference>
<dbReference type="PROSITE" id="PS00153">
    <property type="entry name" value="ATPASE_GAMMA"/>
    <property type="match status" value="1"/>
</dbReference>
<organism>
    <name type="scientific">Arabidopsis thaliana</name>
    <name type="common">Mouse-ear cress</name>
    <dbReference type="NCBI Taxonomy" id="3702"/>
    <lineage>
        <taxon>Eukaryota</taxon>
        <taxon>Viridiplantae</taxon>
        <taxon>Streptophyta</taxon>
        <taxon>Embryophyta</taxon>
        <taxon>Tracheophyta</taxon>
        <taxon>Spermatophyta</taxon>
        <taxon>Magnoliopsida</taxon>
        <taxon>eudicotyledons</taxon>
        <taxon>Gunneridae</taxon>
        <taxon>Pentapetalae</taxon>
        <taxon>rosids</taxon>
        <taxon>malvids</taxon>
        <taxon>Brassicales</taxon>
        <taxon>Brassicaceae</taxon>
        <taxon>Camelineae</taxon>
        <taxon>Arabidopsis</taxon>
    </lineage>
</organism>
<comment type="function">
    <text>Produces ATP from ADP in the presence of a proton gradient across the membrane. The gamma chain is believed to be important in regulating ATPase activity and the flow of protons through the CF(0) complex.</text>
</comment>
<comment type="subunit">
    <text evidence="1">F-type ATPases have 2 components, CF(1) - the catalytic core - and CF(0) - the membrane proton channel. CF(1) has five subunits: alpha(3), beta(3), gamma(1), delta(1), epsilon(1). CF(0) has four main subunits: a, b, b' and c (By similarity).</text>
</comment>
<comment type="subcellular location">
    <subcellularLocation>
        <location evidence="1">Plastid</location>
        <location evidence="1">Chloroplast thylakoid membrane</location>
        <topology evidence="1">Peripheral membrane protein</topology>
    </subcellularLocation>
</comment>
<comment type="induction">
    <text>By light.</text>
</comment>
<comment type="similarity">
    <text evidence="3">Belongs to the ATPase gamma chain family.</text>
</comment>
<evidence type="ECO:0000250" key="1"/>
<evidence type="ECO:0000256" key="2">
    <source>
        <dbReference type="SAM" id="MobiDB-lite"/>
    </source>
</evidence>
<evidence type="ECO:0000305" key="3"/>
<gene>
    <name type="primary">ATPC2</name>
    <name type="ordered locus">At1g15700</name>
    <name type="ORF">F7H2.4</name>
</gene>
<accession>Q01909</accession>